<name>TPIS_EMENI</name>
<comment type="catalytic activity">
    <reaction>
        <text>D-glyceraldehyde 3-phosphate = dihydroxyacetone phosphate</text>
        <dbReference type="Rhea" id="RHEA:18585"/>
        <dbReference type="ChEBI" id="CHEBI:57642"/>
        <dbReference type="ChEBI" id="CHEBI:59776"/>
        <dbReference type="EC" id="5.3.1.1"/>
    </reaction>
</comment>
<comment type="pathway">
    <text>Carbohydrate biosynthesis; gluconeogenesis.</text>
</comment>
<comment type="pathway">
    <text>Carbohydrate degradation; glycolysis; D-glyceraldehyde 3-phosphate from glycerone phosphate: step 1/1.</text>
</comment>
<comment type="subunit">
    <text>Homodimer.</text>
</comment>
<comment type="similarity">
    <text evidence="2">Belongs to the triosephosphate isomerase family.</text>
</comment>
<accession>P04828</accession>
<accession>C8V2X7</accession>
<accession>Q5AXT0</accession>
<dbReference type="EC" id="5.3.1.1"/>
<dbReference type="EMBL" id="D10019">
    <property type="protein sequence ID" value="BAA00908.1"/>
    <property type="molecule type" value="Genomic_DNA"/>
</dbReference>
<dbReference type="EMBL" id="AACD01000113">
    <property type="protein sequence ID" value="EAA58299.1"/>
    <property type="molecule type" value="Genomic_DNA"/>
</dbReference>
<dbReference type="EMBL" id="BN001301">
    <property type="protein sequence ID" value="CBF71690.1"/>
    <property type="molecule type" value="Genomic_DNA"/>
</dbReference>
<dbReference type="PIR" id="A25502">
    <property type="entry name" value="ISASTN"/>
</dbReference>
<dbReference type="RefSeq" id="XP_664504.1">
    <property type="nucleotide sequence ID" value="XM_659412.1"/>
</dbReference>
<dbReference type="SMR" id="P04828"/>
<dbReference type="FunCoup" id="P04828">
    <property type="interactions" value="692"/>
</dbReference>
<dbReference type="STRING" id="227321.P04828"/>
<dbReference type="EnsemblFungi" id="CBF71690">
    <property type="protein sequence ID" value="CBF71690"/>
    <property type="gene ID" value="ANIA_06900"/>
</dbReference>
<dbReference type="KEGG" id="ani:ANIA_06900"/>
<dbReference type="VEuPathDB" id="FungiDB:AN6900"/>
<dbReference type="eggNOG" id="KOG1643">
    <property type="taxonomic scope" value="Eukaryota"/>
</dbReference>
<dbReference type="HOGENOM" id="CLU_024251_2_3_1"/>
<dbReference type="InParanoid" id="P04828"/>
<dbReference type="OMA" id="NWKMHMT"/>
<dbReference type="OrthoDB" id="6715177at2759"/>
<dbReference type="UniPathway" id="UPA00109">
    <property type="reaction ID" value="UER00189"/>
</dbReference>
<dbReference type="UniPathway" id="UPA00138"/>
<dbReference type="Proteomes" id="UP000000560">
    <property type="component" value="Chromosome I"/>
</dbReference>
<dbReference type="GO" id="GO:0005829">
    <property type="term" value="C:cytosol"/>
    <property type="evidence" value="ECO:0000318"/>
    <property type="project" value="GO_Central"/>
</dbReference>
<dbReference type="GO" id="GO:0004807">
    <property type="term" value="F:triose-phosphate isomerase activity"/>
    <property type="evidence" value="ECO:0000318"/>
    <property type="project" value="GO_Central"/>
</dbReference>
<dbReference type="GO" id="GO:0097308">
    <property type="term" value="P:cellular response to farnesol"/>
    <property type="evidence" value="ECO:0000270"/>
    <property type="project" value="AspGD"/>
</dbReference>
<dbReference type="GO" id="GO:0006094">
    <property type="term" value="P:gluconeogenesis"/>
    <property type="evidence" value="ECO:0000318"/>
    <property type="project" value="GO_Central"/>
</dbReference>
<dbReference type="GO" id="GO:0046166">
    <property type="term" value="P:glyceraldehyde-3-phosphate biosynthetic process"/>
    <property type="evidence" value="ECO:0000318"/>
    <property type="project" value="GO_Central"/>
</dbReference>
<dbReference type="GO" id="GO:0019563">
    <property type="term" value="P:glycerol catabolic process"/>
    <property type="evidence" value="ECO:0000318"/>
    <property type="project" value="GO_Central"/>
</dbReference>
<dbReference type="GO" id="GO:0006096">
    <property type="term" value="P:glycolytic process"/>
    <property type="evidence" value="ECO:0000318"/>
    <property type="project" value="GO_Central"/>
</dbReference>
<dbReference type="CDD" id="cd00311">
    <property type="entry name" value="TIM"/>
    <property type="match status" value="1"/>
</dbReference>
<dbReference type="FunFam" id="3.20.20.70:FF:000025">
    <property type="entry name" value="Triosephosphate isomerase"/>
    <property type="match status" value="1"/>
</dbReference>
<dbReference type="Gene3D" id="3.20.20.70">
    <property type="entry name" value="Aldolase class I"/>
    <property type="match status" value="1"/>
</dbReference>
<dbReference type="HAMAP" id="MF_00147_B">
    <property type="entry name" value="TIM_B"/>
    <property type="match status" value="1"/>
</dbReference>
<dbReference type="InterPro" id="IPR013785">
    <property type="entry name" value="Aldolase_TIM"/>
</dbReference>
<dbReference type="InterPro" id="IPR035990">
    <property type="entry name" value="TIM_sf"/>
</dbReference>
<dbReference type="InterPro" id="IPR022896">
    <property type="entry name" value="TrioseP_Isoase_bac/euk"/>
</dbReference>
<dbReference type="InterPro" id="IPR000652">
    <property type="entry name" value="Triosephosphate_isomerase"/>
</dbReference>
<dbReference type="InterPro" id="IPR020861">
    <property type="entry name" value="Triosephosphate_isomerase_AS"/>
</dbReference>
<dbReference type="NCBIfam" id="TIGR00419">
    <property type="entry name" value="tim"/>
    <property type="match status" value="1"/>
</dbReference>
<dbReference type="PANTHER" id="PTHR21139">
    <property type="entry name" value="TRIOSEPHOSPHATE ISOMERASE"/>
    <property type="match status" value="1"/>
</dbReference>
<dbReference type="PANTHER" id="PTHR21139:SF41">
    <property type="entry name" value="TRIOSEPHOSPHATE ISOMERASE"/>
    <property type="match status" value="1"/>
</dbReference>
<dbReference type="Pfam" id="PF00121">
    <property type="entry name" value="TIM"/>
    <property type="match status" value="1"/>
</dbReference>
<dbReference type="SUPFAM" id="SSF51351">
    <property type="entry name" value="Triosephosphate isomerase (TIM)"/>
    <property type="match status" value="1"/>
</dbReference>
<dbReference type="PROSITE" id="PS00171">
    <property type="entry name" value="TIM_1"/>
    <property type="match status" value="1"/>
</dbReference>
<dbReference type="PROSITE" id="PS51440">
    <property type="entry name" value="TIM_2"/>
    <property type="match status" value="1"/>
</dbReference>
<proteinExistence type="inferred from homology"/>
<organism>
    <name type="scientific">Emericella nidulans (strain FGSC A4 / ATCC 38163 / CBS 112.46 / NRRL 194 / M139)</name>
    <name type="common">Aspergillus nidulans</name>
    <dbReference type="NCBI Taxonomy" id="227321"/>
    <lineage>
        <taxon>Eukaryota</taxon>
        <taxon>Fungi</taxon>
        <taxon>Dikarya</taxon>
        <taxon>Ascomycota</taxon>
        <taxon>Pezizomycotina</taxon>
        <taxon>Eurotiomycetes</taxon>
        <taxon>Eurotiomycetidae</taxon>
        <taxon>Eurotiales</taxon>
        <taxon>Aspergillaceae</taxon>
        <taxon>Aspergillus</taxon>
        <taxon>Aspergillus subgen. Nidulantes</taxon>
    </lineage>
</organism>
<evidence type="ECO:0000250" key="1"/>
<evidence type="ECO:0000305" key="2"/>
<gene>
    <name type="primary">tpiA</name>
    <name type="ORF">AN6900</name>
</gene>
<sequence length="249" mass="27157">MPRKFFVGGNFKMNGNAESTTSIIKNLNSANLDKSVEVVVSPPALYLLQAREVANKEIGVAAQNVFDKPNGAFTGEISVQQLREANIDWTILGHSERRVILKETDEFIARKTKAAIEGGLQVIFCIGETLEEREANKTIDVVTRQLNAAAKELSKEQWAKVVIAYEPVWAIGTGKVATTEQAQEVHSAIRKWLKDAISAEAAENTRIIYGGSVSEKNCKDLAKEADIDGFLVGGASLKPAFVDIVNARL</sequence>
<feature type="chain" id="PRO_0000090162" description="Triosephosphate isomerase">
    <location>
        <begin position="1"/>
        <end position="249"/>
    </location>
</feature>
<feature type="active site" description="Electrophile" evidence="1">
    <location>
        <position position="94"/>
    </location>
</feature>
<feature type="active site" description="Proton acceptor" evidence="1">
    <location>
        <position position="166"/>
    </location>
</feature>
<feature type="binding site" evidence="1">
    <location>
        <position position="10"/>
    </location>
    <ligand>
        <name>substrate</name>
    </ligand>
</feature>
<feature type="binding site" evidence="1">
    <location>
        <position position="12"/>
    </location>
    <ligand>
        <name>substrate</name>
    </ligand>
</feature>
<reference key="1">
    <citation type="journal article" date="1986" name="Cell">
        <title>Nucleotide sequence of the triosephosphate isomerase gene from Aspergillus nidulans: implications for a differential loss of introns.</title>
        <authorList>
            <person name="McKnight G.L."/>
            <person name="O'Hara P.J."/>
            <person name="Parker M.L."/>
        </authorList>
    </citation>
    <scope>NUCLEOTIDE SEQUENCE [GENOMIC DNA]</scope>
</reference>
<reference key="2">
    <citation type="journal article" date="2005" name="Nature">
        <title>Sequencing of Aspergillus nidulans and comparative analysis with A. fumigatus and A. oryzae.</title>
        <authorList>
            <person name="Galagan J.E."/>
            <person name="Calvo S.E."/>
            <person name="Cuomo C."/>
            <person name="Ma L.-J."/>
            <person name="Wortman J.R."/>
            <person name="Batzoglou S."/>
            <person name="Lee S.-I."/>
            <person name="Bastuerkmen M."/>
            <person name="Spevak C.C."/>
            <person name="Clutterbuck J."/>
            <person name="Kapitonov V."/>
            <person name="Jurka J."/>
            <person name="Scazzocchio C."/>
            <person name="Farman M.L."/>
            <person name="Butler J."/>
            <person name="Purcell S."/>
            <person name="Harris S."/>
            <person name="Braus G.H."/>
            <person name="Draht O."/>
            <person name="Busch S."/>
            <person name="D'Enfert C."/>
            <person name="Bouchier C."/>
            <person name="Goldman G.H."/>
            <person name="Bell-Pedersen D."/>
            <person name="Griffiths-Jones S."/>
            <person name="Doonan J.H."/>
            <person name="Yu J."/>
            <person name="Vienken K."/>
            <person name="Pain A."/>
            <person name="Freitag M."/>
            <person name="Selker E.U."/>
            <person name="Archer D.B."/>
            <person name="Penalva M.A."/>
            <person name="Oakley B.R."/>
            <person name="Momany M."/>
            <person name="Tanaka T."/>
            <person name="Kumagai T."/>
            <person name="Asai K."/>
            <person name="Machida M."/>
            <person name="Nierman W.C."/>
            <person name="Denning D.W."/>
            <person name="Caddick M.X."/>
            <person name="Hynes M."/>
            <person name="Paoletti M."/>
            <person name="Fischer R."/>
            <person name="Miller B.L."/>
            <person name="Dyer P.S."/>
            <person name="Sachs M.S."/>
            <person name="Osmani S.A."/>
            <person name="Birren B.W."/>
        </authorList>
    </citation>
    <scope>NUCLEOTIDE SEQUENCE [LARGE SCALE GENOMIC DNA]</scope>
    <source>
        <strain>FGSC A4 / ATCC 38163 / CBS 112.46 / NRRL 194 / M139</strain>
    </source>
</reference>
<reference key="3">
    <citation type="journal article" date="2009" name="Fungal Genet. Biol.">
        <title>The 2008 update of the Aspergillus nidulans genome annotation: a community effort.</title>
        <authorList>
            <person name="Wortman J.R."/>
            <person name="Gilsenan J.M."/>
            <person name="Joardar V."/>
            <person name="Deegan J."/>
            <person name="Clutterbuck J."/>
            <person name="Andersen M.R."/>
            <person name="Archer D."/>
            <person name="Bencina M."/>
            <person name="Braus G."/>
            <person name="Coutinho P."/>
            <person name="von Dohren H."/>
            <person name="Doonan J."/>
            <person name="Driessen A.J."/>
            <person name="Durek P."/>
            <person name="Espeso E."/>
            <person name="Fekete E."/>
            <person name="Flipphi M."/>
            <person name="Estrada C.G."/>
            <person name="Geysens S."/>
            <person name="Goldman G."/>
            <person name="de Groot P.W."/>
            <person name="Hansen K."/>
            <person name="Harris S.D."/>
            <person name="Heinekamp T."/>
            <person name="Helmstaedt K."/>
            <person name="Henrissat B."/>
            <person name="Hofmann G."/>
            <person name="Homan T."/>
            <person name="Horio T."/>
            <person name="Horiuchi H."/>
            <person name="James S."/>
            <person name="Jones M."/>
            <person name="Karaffa L."/>
            <person name="Karanyi Z."/>
            <person name="Kato M."/>
            <person name="Keller N."/>
            <person name="Kelly D.E."/>
            <person name="Kiel J.A."/>
            <person name="Kim J.M."/>
            <person name="van der Klei I.J."/>
            <person name="Klis F.M."/>
            <person name="Kovalchuk A."/>
            <person name="Krasevec N."/>
            <person name="Kubicek C.P."/>
            <person name="Liu B."/>
            <person name="Maccabe A."/>
            <person name="Meyer V."/>
            <person name="Mirabito P."/>
            <person name="Miskei M."/>
            <person name="Mos M."/>
            <person name="Mullins J."/>
            <person name="Nelson D.R."/>
            <person name="Nielsen J."/>
            <person name="Oakley B.R."/>
            <person name="Osmani S.A."/>
            <person name="Pakula T."/>
            <person name="Paszewski A."/>
            <person name="Paulsen I."/>
            <person name="Pilsyk S."/>
            <person name="Pocsi I."/>
            <person name="Punt P.J."/>
            <person name="Ram A.F."/>
            <person name="Ren Q."/>
            <person name="Robellet X."/>
            <person name="Robson G."/>
            <person name="Seiboth B."/>
            <person name="van Solingen P."/>
            <person name="Specht T."/>
            <person name="Sun J."/>
            <person name="Taheri-Talesh N."/>
            <person name="Takeshita N."/>
            <person name="Ussery D."/>
            <person name="vanKuyk P.A."/>
            <person name="Visser H."/>
            <person name="van de Vondervoort P.J."/>
            <person name="de Vries R.P."/>
            <person name="Walton J."/>
            <person name="Xiang X."/>
            <person name="Xiong Y."/>
            <person name="Zeng A.P."/>
            <person name="Brandt B.W."/>
            <person name="Cornell M.J."/>
            <person name="van den Hondel C.A."/>
            <person name="Visser J."/>
            <person name="Oliver S.G."/>
            <person name="Turner G."/>
        </authorList>
    </citation>
    <scope>GENOME REANNOTATION</scope>
    <source>
        <strain>FGSC A4 / ATCC 38163 / CBS 112.46 / NRRL 194 / M139</strain>
    </source>
</reference>
<protein>
    <recommendedName>
        <fullName>Triosephosphate isomerase</fullName>
        <shortName>TIM</shortName>
        <ecNumber>5.3.1.1</ecNumber>
    </recommendedName>
    <alternativeName>
        <fullName>Triose-phosphate isomerase</fullName>
    </alternativeName>
</protein>
<keyword id="KW-0312">Gluconeogenesis</keyword>
<keyword id="KW-0324">Glycolysis</keyword>
<keyword id="KW-0413">Isomerase</keyword>
<keyword id="KW-1185">Reference proteome</keyword>